<evidence type="ECO:0000255" key="1">
    <source>
        <dbReference type="HAMAP-Rule" id="MF_01064"/>
    </source>
</evidence>
<name>Y2115_AERHH</name>
<feature type="chain" id="PRO_0000277518" description="UPF0253 protein AHA_2115">
    <location>
        <begin position="1"/>
        <end position="68"/>
    </location>
</feature>
<comment type="similarity">
    <text evidence="1">Belongs to the UPF0253 family.</text>
</comment>
<gene>
    <name type="ordered locus">AHA_2115</name>
</gene>
<keyword id="KW-1185">Reference proteome</keyword>
<organism>
    <name type="scientific">Aeromonas hydrophila subsp. hydrophila (strain ATCC 7966 / DSM 30187 / BCRC 13018 / CCUG 14551 / JCM 1027 / KCTC 2358 / NCIMB 9240 / NCTC 8049)</name>
    <dbReference type="NCBI Taxonomy" id="380703"/>
    <lineage>
        <taxon>Bacteria</taxon>
        <taxon>Pseudomonadati</taxon>
        <taxon>Pseudomonadota</taxon>
        <taxon>Gammaproteobacteria</taxon>
        <taxon>Aeromonadales</taxon>
        <taxon>Aeromonadaceae</taxon>
        <taxon>Aeromonas</taxon>
    </lineage>
</organism>
<reference key="1">
    <citation type="journal article" date="2006" name="J. Bacteriol.">
        <title>Genome sequence of Aeromonas hydrophila ATCC 7966T: jack of all trades.</title>
        <authorList>
            <person name="Seshadri R."/>
            <person name="Joseph S.W."/>
            <person name="Chopra A.K."/>
            <person name="Sha J."/>
            <person name="Shaw J."/>
            <person name="Graf J."/>
            <person name="Haft D.H."/>
            <person name="Wu M."/>
            <person name="Ren Q."/>
            <person name="Rosovitz M.J."/>
            <person name="Madupu R."/>
            <person name="Tallon L."/>
            <person name="Kim M."/>
            <person name="Jin S."/>
            <person name="Vuong H."/>
            <person name="Stine O.C."/>
            <person name="Ali A."/>
            <person name="Horneman A.J."/>
            <person name="Heidelberg J.F."/>
        </authorList>
    </citation>
    <scope>NUCLEOTIDE SEQUENCE [LARGE SCALE GENOMIC DNA]</scope>
    <source>
        <strain>ATCC 7966 / DSM 30187 / BCRC 13018 / CCUG 14551 / JCM 1027 / KCTC 2358 / NCIMB 9240 / NCTC 8049</strain>
    </source>
</reference>
<sequence>MQVYQCCEAIRIAYNQIGSGEQGYVPQAIAATIRALNAVASDERVPADLREQAAYAAANLLISDHEDA</sequence>
<protein>
    <recommendedName>
        <fullName evidence="1">UPF0253 protein AHA_2115</fullName>
    </recommendedName>
</protein>
<dbReference type="EMBL" id="CP000462">
    <property type="protein sequence ID" value="ABK39383.1"/>
    <property type="molecule type" value="Genomic_DNA"/>
</dbReference>
<dbReference type="RefSeq" id="WP_005301307.1">
    <property type="nucleotide sequence ID" value="NC_008570.1"/>
</dbReference>
<dbReference type="RefSeq" id="YP_856639.1">
    <property type="nucleotide sequence ID" value="NC_008570.1"/>
</dbReference>
<dbReference type="SMR" id="A0KK38"/>
<dbReference type="STRING" id="380703.AHA_2115"/>
<dbReference type="EnsemblBacteria" id="ABK39383">
    <property type="protein sequence ID" value="ABK39383"/>
    <property type="gene ID" value="AHA_2115"/>
</dbReference>
<dbReference type="KEGG" id="aha:AHA_2115"/>
<dbReference type="PATRIC" id="fig|380703.7.peg.2117"/>
<dbReference type="eggNOG" id="ENOG5032Z3X">
    <property type="taxonomic scope" value="Bacteria"/>
</dbReference>
<dbReference type="HOGENOM" id="CLU_190008_0_0_6"/>
<dbReference type="OrthoDB" id="5900992at2"/>
<dbReference type="PRO" id="PR:A0KK38"/>
<dbReference type="Proteomes" id="UP000000756">
    <property type="component" value="Chromosome"/>
</dbReference>
<dbReference type="HAMAP" id="MF_01064">
    <property type="entry name" value="UPF0253"/>
    <property type="match status" value="1"/>
</dbReference>
<dbReference type="InterPro" id="IPR009624">
    <property type="entry name" value="UPF0253"/>
</dbReference>
<dbReference type="NCBIfam" id="NF003436">
    <property type="entry name" value="PRK04964.1"/>
    <property type="match status" value="1"/>
</dbReference>
<dbReference type="Pfam" id="PF06786">
    <property type="entry name" value="UPF0253"/>
    <property type="match status" value="1"/>
</dbReference>
<accession>A0KK38</accession>
<proteinExistence type="inferred from homology"/>